<sequence>MDDVTKALNLVPMVVEQTSRGERAYDIYSRLLKERLIFLVGPIDDYMANLIVAQLLFLEAENPEKDINIYINSPGGVVTAGMAIYDTMQYIKPAVSTICVGQAASMGALLLASGASGKRYALPNSRVMIHQPLGGFQGQATDIDIHAREILALRARLNEILAKHTGQSLETIAHDTERDNFKSAVDAQAYGLVDQVLGQRPEELIQSS</sequence>
<feature type="chain" id="PRO_0000179722" description="ATP-dependent Clp protease proteolytic subunit">
    <location>
        <begin position="1"/>
        <end position="208"/>
    </location>
</feature>
<feature type="active site" description="Nucleophile" evidence="1">
    <location>
        <position position="105"/>
    </location>
</feature>
<feature type="active site" evidence="1">
    <location>
        <position position="130"/>
    </location>
</feature>
<dbReference type="EC" id="3.4.21.92" evidence="1"/>
<dbReference type="EMBL" id="AE003849">
    <property type="protein sequence ID" value="AAF83997.1"/>
    <property type="molecule type" value="Genomic_DNA"/>
</dbReference>
<dbReference type="PIR" id="A82712">
    <property type="entry name" value="A82712"/>
</dbReference>
<dbReference type="RefSeq" id="WP_010893698.1">
    <property type="nucleotide sequence ID" value="NC_002488.3"/>
</dbReference>
<dbReference type="SMR" id="Q9PE41"/>
<dbReference type="STRING" id="160492.XF_1187"/>
<dbReference type="MEROPS" id="S14.001"/>
<dbReference type="KEGG" id="xfa:XF_1187"/>
<dbReference type="eggNOG" id="COG0740">
    <property type="taxonomic scope" value="Bacteria"/>
</dbReference>
<dbReference type="HOGENOM" id="CLU_058707_3_3_6"/>
<dbReference type="Proteomes" id="UP000000812">
    <property type="component" value="Chromosome"/>
</dbReference>
<dbReference type="GO" id="GO:0005737">
    <property type="term" value="C:cytoplasm"/>
    <property type="evidence" value="ECO:0007669"/>
    <property type="project" value="UniProtKB-SubCell"/>
</dbReference>
<dbReference type="GO" id="GO:0009368">
    <property type="term" value="C:endopeptidase Clp complex"/>
    <property type="evidence" value="ECO:0007669"/>
    <property type="project" value="TreeGrafter"/>
</dbReference>
<dbReference type="GO" id="GO:0004176">
    <property type="term" value="F:ATP-dependent peptidase activity"/>
    <property type="evidence" value="ECO:0007669"/>
    <property type="project" value="InterPro"/>
</dbReference>
<dbReference type="GO" id="GO:0051117">
    <property type="term" value="F:ATPase binding"/>
    <property type="evidence" value="ECO:0007669"/>
    <property type="project" value="TreeGrafter"/>
</dbReference>
<dbReference type="GO" id="GO:0004252">
    <property type="term" value="F:serine-type endopeptidase activity"/>
    <property type="evidence" value="ECO:0007669"/>
    <property type="project" value="UniProtKB-UniRule"/>
</dbReference>
<dbReference type="GO" id="GO:0006515">
    <property type="term" value="P:protein quality control for misfolded or incompletely synthesized proteins"/>
    <property type="evidence" value="ECO:0007669"/>
    <property type="project" value="TreeGrafter"/>
</dbReference>
<dbReference type="CDD" id="cd07017">
    <property type="entry name" value="S14_ClpP_2"/>
    <property type="match status" value="1"/>
</dbReference>
<dbReference type="FunFam" id="3.90.226.10:FF:000001">
    <property type="entry name" value="ATP-dependent Clp protease proteolytic subunit"/>
    <property type="match status" value="1"/>
</dbReference>
<dbReference type="Gene3D" id="3.90.226.10">
    <property type="entry name" value="2-enoyl-CoA Hydratase, Chain A, domain 1"/>
    <property type="match status" value="1"/>
</dbReference>
<dbReference type="HAMAP" id="MF_00444">
    <property type="entry name" value="ClpP"/>
    <property type="match status" value="1"/>
</dbReference>
<dbReference type="InterPro" id="IPR001907">
    <property type="entry name" value="ClpP"/>
</dbReference>
<dbReference type="InterPro" id="IPR029045">
    <property type="entry name" value="ClpP/crotonase-like_dom_sf"/>
</dbReference>
<dbReference type="InterPro" id="IPR023562">
    <property type="entry name" value="ClpP/TepA"/>
</dbReference>
<dbReference type="InterPro" id="IPR033135">
    <property type="entry name" value="ClpP_His_AS"/>
</dbReference>
<dbReference type="InterPro" id="IPR018215">
    <property type="entry name" value="ClpP_Ser_AS"/>
</dbReference>
<dbReference type="NCBIfam" id="TIGR00493">
    <property type="entry name" value="clpP"/>
    <property type="match status" value="1"/>
</dbReference>
<dbReference type="NCBIfam" id="NF001368">
    <property type="entry name" value="PRK00277.1"/>
    <property type="match status" value="1"/>
</dbReference>
<dbReference type="NCBIfam" id="NF009205">
    <property type="entry name" value="PRK12553.1"/>
    <property type="match status" value="1"/>
</dbReference>
<dbReference type="PANTHER" id="PTHR10381">
    <property type="entry name" value="ATP-DEPENDENT CLP PROTEASE PROTEOLYTIC SUBUNIT"/>
    <property type="match status" value="1"/>
</dbReference>
<dbReference type="PANTHER" id="PTHR10381:SF70">
    <property type="entry name" value="ATP-DEPENDENT CLP PROTEASE PROTEOLYTIC SUBUNIT"/>
    <property type="match status" value="1"/>
</dbReference>
<dbReference type="Pfam" id="PF00574">
    <property type="entry name" value="CLP_protease"/>
    <property type="match status" value="1"/>
</dbReference>
<dbReference type="PRINTS" id="PR00127">
    <property type="entry name" value="CLPPROTEASEP"/>
</dbReference>
<dbReference type="SUPFAM" id="SSF52096">
    <property type="entry name" value="ClpP/crotonase"/>
    <property type="match status" value="1"/>
</dbReference>
<dbReference type="PROSITE" id="PS00382">
    <property type="entry name" value="CLP_PROTEASE_HIS"/>
    <property type="match status" value="1"/>
</dbReference>
<dbReference type="PROSITE" id="PS00381">
    <property type="entry name" value="CLP_PROTEASE_SER"/>
    <property type="match status" value="1"/>
</dbReference>
<protein>
    <recommendedName>
        <fullName evidence="1">ATP-dependent Clp protease proteolytic subunit</fullName>
        <ecNumber evidence="1">3.4.21.92</ecNumber>
    </recommendedName>
    <alternativeName>
        <fullName evidence="1">Endopeptidase Clp</fullName>
    </alternativeName>
</protein>
<evidence type="ECO:0000255" key="1">
    <source>
        <dbReference type="HAMAP-Rule" id="MF_00444"/>
    </source>
</evidence>
<reference key="1">
    <citation type="journal article" date="2000" name="Nature">
        <title>The genome sequence of the plant pathogen Xylella fastidiosa.</title>
        <authorList>
            <person name="Simpson A.J.G."/>
            <person name="Reinach F.C."/>
            <person name="Arruda P."/>
            <person name="Abreu F.A."/>
            <person name="Acencio M."/>
            <person name="Alvarenga R."/>
            <person name="Alves L.M.C."/>
            <person name="Araya J.E."/>
            <person name="Baia G.S."/>
            <person name="Baptista C.S."/>
            <person name="Barros M.H."/>
            <person name="Bonaccorsi E.D."/>
            <person name="Bordin S."/>
            <person name="Bove J.M."/>
            <person name="Briones M.R.S."/>
            <person name="Bueno M.R.P."/>
            <person name="Camargo A.A."/>
            <person name="Camargo L.E.A."/>
            <person name="Carraro D.M."/>
            <person name="Carrer H."/>
            <person name="Colauto N.B."/>
            <person name="Colombo C."/>
            <person name="Costa F.F."/>
            <person name="Costa M.C.R."/>
            <person name="Costa-Neto C.M."/>
            <person name="Coutinho L.L."/>
            <person name="Cristofani M."/>
            <person name="Dias-Neto E."/>
            <person name="Docena C."/>
            <person name="El-Dorry H."/>
            <person name="Facincani A.P."/>
            <person name="Ferreira A.J.S."/>
            <person name="Ferreira V.C.A."/>
            <person name="Ferro J.A."/>
            <person name="Fraga J.S."/>
            <person name="Franca S.C."/>
            <person name="Franco M.C."/>
            <person name="Frohme M."/>
            <person name="Furlan L.R."/>
            <person name="Garnier M."/>
            <person name="Goldman G.H."/>
            <person name="Goldman M.H.S."/>
            <person name="Gomes S.L."/>
            <person name="Gruber A."/>
            <person name="Ho P.L."/>
            <person name="Hoheisel J.D."/>
            <person name="Junqueira M.L."/>
            <person name="Kemper E.L."/>
            <person name="Kitajima J.P."/>
            <person name="Krieger J.E."/>
            <person name="Kuramae E.E."/>
            <person name="Laigret F."/>
            <person name="Lambais M.R."/>
            <person name="Leite L.C.C."/>
            <person name="Lemos E.G.M."/>
            <person name="Lemos M.V.F."/>
            <person name="Lopes S.A."/>
            <person name="Lopes C.R."/>
            <person name="Machado J.A."/>
            <person name="Machado M.A."/>
            <person name="Madeira A.M.B.N."/>
            <person name="Madeira H.M.F."/>
            <person name="Marino C.L."/>
            <person name="Marques M.V."/>
            <person name="Martins E.A.L."/>
            <person name="Martins E.M.F."/>
            <person name="Matsukuma A.Y."/>
            <person name="Menck C.F.M."/>
            <person name="Miracca E.C."/>
            <person name="Miyaki C.Y."/>
            <person name="Monteiro-Vitorello C.B."/>
            <person name="Moon D.H."/>
            <person name="Nagai M.A."/>
            <person name="Nascimento A.L.T.O."/>
            <person name="Netto L.E.S."/>
            <person name="Nhani A. Jr."/>
            <person name="Nobrega F.G."/>
            <person name="Nunes L.R."/>
            <person name="Oliveira M.A."/>
            <person name="de Oliveira M.C."/>
            <person name="de Oliveira R.C."/>
            <person name="Palmieri D.A."/>
            <person name="Paris A."/>
            <person name="Peixoto B.R."/>
            <person name="Pereira G.A.G."/>
            <person name="Pereira H.A. Jr."/>
            <person name="Pesquero J.B."/>
            <person name="Quaggio R.B."/>
            <person name="Roberto P.G."/>
            <person name="Rodrigues V."/>
            <person name="de Rosa A.J.M."/>
            <person name="de Rosa V.E. Jr."/>
            <person name="de Sa R.G."/>
            <person name="Santelli R.V."/>
            <person name="Sawasaki H.E."/>
            <person name="da Silva A.C.R."/>
            <person name="da Silva A.M."/>
            <person name="da Silva F.R."/>
            <person name="Silva W.A. Jr."/>
            <person name="da Silveira J.F."/>
            <person name="Silvestri M.L.Z."/>
            <person name="Siqueira W.J."/>
            <person name="de Souza A.A."/>
            <person name="de Souza A.P."/>
            <person name="Terenzi M.F."/>
            <person name="Truffi D."/>
            <person name="Tsai S.M."/>
            <person name="Tsuhako M.H."/>
            <person name="Vallada H."/>
            <person name="Van Sluys M.A."/>
            <person name="Verjovski-Almeida S."/>
            <person name="Vettore A.L."/>
            <person name="Zago M.A."/>
            <person name="Zatz M."/>
            <person name="Meidanis J."/>
            <person name="Setubal J.C."/>
        </authorList>
    </citation>
    <scope>NUCLEOTIDE SEQUENCE [LARGE SCALE GENOMIC DNA]</scope>
    <source>
        <strain>9a5c</strain>
    </source>
</reference>
<comment type="function">
    <text evidence="1">Cleaves peptides in various proteins in a process that requires ATP hydrolysis. Has a chymotrypsin-like activity. Plays a major role in the degradation of misfolded proteins.</text>
</comment>
<comment type="catalytic activity">
    <reaction evidence="1">
        <text>Hydrolysis of proteins to small peptides in the presence of ATP and magnesium. alpha-casein is the usual test substrate. In the absence of ATP, only oligopeptides shorter than five residues are hydrolyzed (such as succinyl-Leu-Tyr-|-NHMec, and Leu-Tyr-Leu-|-Tyr-Trp, in which cleavage of the -Tyr-|-Leu- and -Tyr-|-Trp bonds also occurs).</text>
        <dbReference type="EC" id="3.4.21.92"/>
    </reaction>
</comment>
<comment type="subunit">
    <text evidence="1">Fourteen ClpP subunits assemble into 2 heptameric rings which stack back to back to give a disk-like structure with a central cavity, resembling the structure of eukaryotic proteasomes.</text>
</comment>
<comment type="subcellular location">
    <subcellularLocation>
        <location evidence="1">Cytoplasm</location>
    </subcellularLocation>
</comment>
<comment type="similarity">
    <text evidence="1">Belongs to the peptidase S14 family.</text>
</comment>
<proteinExistence type="inferred from homology"/>
<keyword id="KW-0963">Cytoplasm</keyword>
<keyword id="KW-0378">Hydrolase</keyword>
<keyword id="KW-0645">Protease</keyword>
<keyword id="KW-0720">Serine protease</keyword>
<gene>
    <name evidence="1" type="primary">clpP</name>
    <name type="ordered locus">XF_1187</name>
</gene>
<name>CLPP_XYLFA</name>
<organism>
    <name type="scientific">Xylella fastidiosa (strain 9a5c)</name>
    <dbReference type="NCBI Taxonomy" id="160492"/>
    <lineage>
        <taxon>Bacteria</taxon>
        <taxon>Pseudomonadati</taxon>
        <taxon>Pseudomonadota</taxon>
        <taxon>Gammaproteobacteria</taxon>
        <taxon>Lysobacterales</taxon>
        <taxon>Lysobacteraceae</taxon>
        <taxon>Xylella</taxon>
    </lineage>
</organism>
<accession>Q9PE41</accession>